<keyword id="KW-0025">Alternative splicing</keyword>
<keyword id="KW-0221">Differentiation</keyword>
<keyword id="KW-1185">Reference proteome</keyword>
<keyword id="KW-0726">Sexual differentiation</keyword>
<sequence>MNRLQLLSKGLRLIHKMSEEALAGVPLVHISPEGIFKYVMINVFDGGDASKAVIRGFADCTWHADIFEREEEVFKKLGLRAECPGGGRIEHNPEKKYLKVYGYSQGFGKADHAQTKRILATKYPDYTIEISDEGY</sequence>
<evidence type="ECO:0000250" key="1"/>
<evidence type="ECO:0000269" key="2">
    <source>
    </source>
</evidence>
<evidence type="ECO:0000303" key="3">
    <source>
    </source>
</evidence>
<evidence type="ECO:0000305" key="4"/>
<dbReference type="EMBL" id="M27033">
    <property type="protein sequence ID" value="AAC34203.1"/>
    <property type="molecule type" value="Genomic_DNA"/>
</dbReference>
<dbReference type="EMBL" id="M27033">
    <property type="protein sequence ID" value="AAC34202.1"/>
    <property type="molecule type" value="Genomic_DNA"/>
</dbReference>
<dbReference type="EMBL" id="AE014297">
    <property type="protein sequence ID" value="AAN14209.1"/>
    <property type="molecule type" value="Genomic_DNA"/>
</dbReference>
<dbReference type="EMBL" id="AE014297">
    <property type="protein sequence ID" value="AAO41613.1"/>
    <property type="molecule type" value="Genomic_DNA"/>
</dbReference>
<dbReference type="EMBL" id="AE014297">
    <property type="protein sequence ID" value="AAS65231.1"/>
    <property type="molecule type" value="Genomic_DNA"/>
</dbReference>
<dbReference type="EMBL" id="AY089320">
    <property type="protein sequence ID" value="AAL90058.1"/>
    <property type="molecule type" value="mRNA"/>
</dbReference>
<dbReference type="PIR" id="A32317">
    <property type="entry name" value="A32317"/>
</dbReference>
<dbReference type="RefSeq" id="NP_788762.1">
    <molecule id="P20348-1"/>
    <property type="nucleotide sequence ID" value="NM_176585.2"/>
</dbReference>
<dbReference type="RefSeq" id="NP_788763.1">
    <molecule id="P20348-2"/>
    <property type="nucleotide sequence ID" value="NM_176586.4"/>
</dbReference>
<dbReference type="RefSeq" id="NP_996311.1">
    <molecule id="P20348-2"/>
    <property type="nucleotide sequence ID" value="NM_206588.2"/>
</dbReference>
<dbReference type="SMR" id="P20348"/>
<dbReference type="BioGRID" id="68425">
    <property type="interactions" value="7"/>
</dbReference>
<dbReference type="DIP" id="DIP-18771N"/>
<dbReference type="FunCoup" id="P20348">
    <property type="interactions" value="1340"/>
</dbReference>
<dbReference type="IntAct" id="P20348">
    <property type="interactions" value="28"/>
</dbReference>
<dbReference type="STRING" id="7227.FBpp0084962"/>
<dbReference type="PaxDb" id="7227-FBpp0084962"/>
<dbReference type="DNASU" id="43569"/>
<dbReference type="EnsemblMetazoa" id="FBtr0085595">
    <molecule id="P20348-2"/>
    <property type="protein sequence ID" value="FBpp0084961"/>
    <property type="gene ID" value="FBgn0001280"/>
</dbReference>
<dbReference type="EnsemblMetazoa" id="FBtr0085596">
    <molecule id="P20348-1"/>
    <property type="protein sequence ID" value="FBpp0084962"/>
    <property type="gene ID" value="FBgn0001280"/>
</dbReference>
<dbReference type="EnsemblMetazoa" id="FBtr0085597">
    <molecule id="P20348-2"/>
    <property type="protein sequence ID" value="FBpp0089165"/>
    <property type="gene ID" value="FBgn0001280"/>
</dbReference>
<dbReference type="GeneID" id="43569"/>
<dbReference type="KEGG" id="dme:Dmel_CG7933"/>
<dbReference type="AGR" id="FB:FBgn0001280"/>
<dbReference type="CTD" id="43569"/>
<dbReference type="FlyBase" id="FBgn0001280">
    <property type="gene designation" value="janA"/>
</dbReference>
<dbReference type="VEuPathDB" id="VectorBase:FBgn0001280"/>
<dbReference type="eggNOG" id="ENOG502S4DR">
    <property type="taxonomic scope" value="Eukaryota"/>
</dbReference>
<dbReference type="GeneTree" id="ENSGT00390000002738"/>
<dbReference type="InParanoid" id="P20348"/>
<dbReference type="OMA" id="VRGYSWA"/>
<dbReference type="OrthoDB" id="10249612at2759"/>
<dbReference type="PhylomeDB" id="P20348"/>
<dbReference type="BioGRID-ORCS" id="43569">
    <property type="hits" value="0 hits in 1 CRISPR screen"/>
</dbReference>
<dbReference type="GenomeRNAi" id="43569"/>
<dbReference type="PRO" id="PR:P20348"/>
<dbReference type="Proteomes" id="UP000000803">
    <property type="component" value="Chromosome 3R"/>
</dbReference>
<dbReference type="Bgee" id="FBgn0001280">
    <property type="expression patterns" value="Expressed in spermatocyte in testis and 150 other cell types or tissues"/>
</dbReference>
<dbReference type="ExpressionAtlas" id="P20348">
    <property type="expression patterns" value="baseline and differential"/>
</dbReference>
<dbReference type="GO" id="GO:0005829">
    <property type="term" value="C:cytosol"/>
    <property type="evidence" value="ECO:0000318"/>
    <property type="project" value="GO_Central"/>
</dbReference>
<dbReference type="GO" id="GO:0101006">
    <property type="term" value="F:protein histidine phosphatase activity"/>
    <property type="evidence" value="ECO:0000318"/>
    <property type="project" value="GO_Central"/>
</dbReference>
<dbReference type="GO" id="GO:0030154">
    <property type="term" value="P:cell differentiation"/>
    <property type="evidence" value="ECO:0007669"/>
    <property type="project" value="UniProtKB-KW"/>
</dbReference>
<dbReference type="GO" id="GO:0007548">
    <property type="term" value="P:sex differentiation"/>
    <property type="evidence" value="ECO:0000270"/>
    <property type="project" value="UniProtKB"/>
</dbReference>
<dbReference type="FunFam" id="3.50.20.20:FF:000001">
    <property type="entry name" value="14 kDa phosphohistidine phosphatase"/>
    <property type="match status" value="1"/>
</dbReference>
<dbReference type="Gene3D" id="3.50.20.20">
    <property type="entry name" value="Janus/Ocnus"/>
    <property type="match status" value="1"/>
</dbReference>
<dbReference type="InterPro" id="IPR007702">
    <property type="entry name" value="Janus"/>
</dbReference>
<dbReference type="InterPro" id="IPR038596">
    <property type="entry name" value="Janus_sf"/>
</dbReference>
<dbReference type="PANTHER" id="PTHR12258:SF5">
    <property type="entry name" value="BCDNA.GH02250-RELATED"/>
    <property type="match status" value="1"/>
</dbReference>
<dbReference type="PANTHER" id="PTHR12258">
    <property type="entry name" value="JANUS-A/JANUS-B"/>
    <property type="match status" value="1"/>
</dbReference>
<dbReference type="Pfam" id="PF05005">
    <property type="entry name" value="Ocnus"/>
    <property type="match status" value="1"/>
</dbReference>
<dbReference type="SUPFAM" id="SSF143724">
    <property type="entry name" value="PHP14-like"/>
    <property type="match status" value="1"/>
</dbReference>
<accession>P20348</accession>
<accession>A4V3M6</accession>
<accession>Q8T475</accession>
<accession>Q9VAB6</accession>
<name>JANA_DROME</name>
<gene>
    <name type="primary">janA</name>
    <name type="ORF">CG7933</name>
</gene>
<reference key="1">
    <citation type="journal article" date="1989" name="Mol. Cell. Biol.">
        <title>Transcriptional and posttranscriptional regulation contributes to the sex-regulated expression of two sequence-related genes at the janus locus of Drosophila melanogaster.</title>
        <authorList>
            <person name="Yanicostas C."/>
            <person name="Vincent A."/>
            <person name="Lepesant J.-A."/>
        </authorList>
    </citation>
    <scope>NUCLEOTIDE SEQUENCE [GENOMIC DNA]</scope>
    <scope>ALTERNATIVE SPLICING (ISOFORMS A AND B)</scope>
    <scope>FUNCTION</scope>
    <scope>TISSUE SPECIFICITY</scope>
    <scope>DEVELOPMENTAL STAGE</scope>
    <source>
        <strain>Canton-S</strain>
    </source>
</reference>
<reference key="2">
    <citation type="journal article" date="2000" name="Science">
        <title>The genome sequence of Drosophila melanogaster.</title>
        <authorList>
            <person name="Adams M.D."/>
            <person name="Celniker S.E."/>
            <person name="Holt R.A."/>
            <person name="Evans C.A."/>
            <person name="Gocayne J.D."/>
            <person name="Amanatides P.G."/>
            <person name="Scherer S.E."/>
            <person name="Li P.W."/>
            <person name="Hoskins R.A."/>
            <person name="Galle R.F."/>
            <person name="George R.A."/>
            <person name="Lewis S.E."/>
            <person name="Richards S."/>
            <person name="Ashburner M."/>
            <person name="Henderson S.N."/>
            <person name="Sutton G.G."/>
            <person name="Wortman J.R."/>
            <person name="Yandell M.D."/>
            <person name="Zhang Q."/>
            <person name="Chen L.X."/>
            <person name="Brandon R.C."/>
            <person name="Rogers Y.-H.C."/>
            <person name="Blazej R.G."/>
            <person name="Champe M."/>
            <person name="Pfeiffer B.D."/>
            <person name="Wan K.H."/>
            <person name="Doyle C."/>
            <person name="Baxter E.G."/>
            <person name="Helt G."/>
            <person name="Nelson C.R."/>
            <person name="Miklos G.L.G."/>
            <person name="Abril J.F."/>
            <person name="Agbayani A."/>
            <person name="An H.-J."/>
            <person name="Andrews-Pfannkoch C."/>
            <person name="Baldwin D."/>
            <person name="Ballew R.M."/>
            <person name="Basu A."/>
            <person name="Baxendale J."/>
            <person name="Bayraktaroglu L."/>
            <person name="Beasley E.M."/>
            <person name="Beeson K.Y."/>
            <person name="Benos P.V."/>
            <person name="Berman B.P."/>
            <person name="Bhandari D."/>
            <person name="Bolshakov S."/>
            <person name="Borkova D."/>
            <person name="Botchan M.R."/>
            <person name="Bouck J."/>
            <person name="Brokstein P."/>
            <person name="Brottier P."/>
            <person name="Burtis K.C."/>
            <person name="Busam D.A."/>
            <person name="Butler H."/>
            <person name="Cadieu E."/>
            <person name="Center A."/>
            <person name="Chandra I."/>
            <person name="Cherry J.M."/>
            <person name="Cawley S."/>
            <person name="Dahlke C."/>
            <person name="Davenport L.B."/>
            <person name="Davies P."/>
            <person name="de Pablos B."/>
            <person name="Delcher A."/>
            <person name="Deng Z."/>
            <person name="Mays A.D."/>
            <person name="Dew I."/>
            <person name="Dietz S.M."/>
            <person name="Dodson K."/>
            <person name="Doup L.E."/>
            <person name="Downes M."/>
            <person name="Dugan-Rocha S."/>
            <person name="Dunkov B.C."/>
            <person name="Dunn P."/>
            <person name="Durbin K.J."/>
            <person name="Evangelista C.C."/>
            <person name="Ferraz C."/>
            <person name="Ferriera S."/>
            <person name="Fleischmann W."/>
            <person name="Fosler C."/>
            <person name="Gabrielian A.E."/>
            <person name="Garg N.S."/>
            <person name="Gelbart W.M."/>
            <person name="Glasser K."/>
            <person name="Glodek A."/>
            <person name="Gong F."/>
            <person name="Gorrell J.H."/>
            <person name="Gu Z."/>
            <person name="Guan P."/>
            <person name="Harris M."/>
            <person name="Harris N.L."/>
            <person name="Harvey D.A."/>
            <person name="Heiman T.J."/>
            <person name="Hernandez J.R."/>
            <person name="Houck J."/>
            <person name="Hostin D."/>
            <person name="Houston K.A."/>
            <person name="Howland T.J."/>
            <person name="Wei M.-H."/>
            <person name="Ibegwam C."/>
            <person name="Jalali M."/>
            <person name="Kalush F."/>
            <person name="Karpen G.H."/>
            <person name="Ke Z."/>
            <person name="Kennison J.A."/>
            <person name="Ketchum K.A."/>
            <person name="Kimmel B.E."/>
            <person name="Kodira C.D."/>
            <person name="Kraft C.L."/>
            <person name="Kravitz S."/>
            <person name="Kulp D."/>
            <person name="Lai Z."/>
            <person name="Lasko P."/>
            <person name="Lei Y."/>
            <person name="Levitsky A.A."/>
            <person name="Li J.H."/>
            <person name="Li Z."/>
            <person name="Liang Y."/>
            <person name="Lin X."/>
            <person name="Liu X."/>
            <person name="Mattei B."/>
            <person name="McIntosh T.C."/>
            <person name="McLeod M.P."/>
            <person name="McPherson D."/>
            <person name="Merkulov G."/>
            <person name="Milshina N.V."/>
            <person name="Mobarry C."/>
            <person name="Morris J."/>
            <person name="Moshrefi A."/>
            <person name="Mount S.M."/>
            <person name="Moy M."/>
            <person name="Murphy B."/>
            <person name="Murphy L."/>
            <person name="Muzny D.M."/>
            <person name="Nelson D.L."/>
            <person name="Nelson D.R."/>
            <person name="Nelson K.A."/>
            <person name="Nixon K."/>
            <person name="Nusskern D.R."/>
            <person name="Pacleb J.M."/>
            <person name="Palazzolo M."/>
            <person name="Pittman G.S."/>
            <person name="Pan S."/>
            <person name="Pollard J."/>
            <person name="Puri V."/>
            <person name="Reese M.G."/>
            <person name="Reinert K."/>
            <person name="Remington K."/>
            <person name="Saunders R.D.C."/>
            <person name="Scheeler F."/>
            <person name="Shen H."/>
            <person name="Shue B.C."/>
            <person name="Siden-Kiamos I."/>
            <person name="Simpson M."/>
            <person name="Skupski M.P."/>
            <person name="Smith T.J."/>
            <person name="Spier E."/>
            <person name="Spradling A.C."/>
            <person name="Stapleton M."/>
            <person name="Strong R."/>
            <person name="Sun E."/>
            <person name="Svirskas R."/>
            <person name="Tector C."/>
            <person name="Turner R."/>
            <person name="Venter E."/>
            <person name="Wang A.H."/>
            <person name="Wang X."/>
            <person name="Wang Z.-Y."/>
            <person name="Wassarman D.A."/>
            <person name="Weinstock G.M."/>
            <person name="Weissenbach J."/>
            <person name="Williams S.M."/>
            <person name="Woodage T."/>
            <person name="Worley K.C."/>
            <person name="Wu D."/>
            <person name="Yang S."/>
            <person name="Yao Q.A."/>
            <person name="Ye J."/>
            <person name="Yeh R.-F."/>
            <person name="Zaveri J.S."/>
            <person name="Zhan M."/>
            <person name="Zhang G."/>
            <person name="Zhao Q."/>
            <person name="Zheng L."/>
            <person name="Zheng X.H."/>
            <person name="Zhong F.N."/>
            <person name="Zhong W."/>
            <person name="Zhou X."/>
            <person name="Zhu S.C."/>
            <person name="Zhu X."/>
            <person name="Smith H.O."/>
            <person name="Gibbs R.A."/>
            <person name="Myers E.W."/>
            <person name="Rubin G.M."/>
            <person name="Venter J.C."/>
        </authorList>
    </citation>
    <scope>NUCLEOTIDE SEQUENCE [LARGE SCALE GENOMIC DNA]</scope>
    <source>
        <strain>Berkeley</strain>
    </source>
</reference>
<reference key="3">
    <citation type="journal article" date="2002" name="Genome Biol.">
        <title>Annotation of the Drosophila melanogaster euchromatic genome: a systematic review.</title>
        <authorList>
            <person name="Misra S."/>
            <person name="Crosby M.A."/>
            <person name="Mungall C.J."/>
            <person name="Matthews B.B."/>
            <person name="Campbell K.S."/>
            <person name="Hradecky P."/>
            <person name="Huang Y."/>
            <person name="Kaminker J.S."/>
            <person name="Millburn G.H."/>
            <person name="Prochnik S.E."/>
            <person name="Smith C.D."/>
            <person name="Tupy J.L."/>
            <person name="Whitfield E.J."/>
            <person name="Bayraktaroglu L."/>
            <person name="Berman B.P."/>
            <person name="Bettencourt B.R."/>
            <person name="Celniker S.E."/>
            <person name="de Grey A.D.N.J."/>
            <person name="Drysdale R.A."/>
            <person name="Harris N.L."/>
            <person name="Richter J."/>
            <person name="Russo S."/>
            <person name="Schroeder A.J."/>
            <person name="Shu S.Q."/>
            <person name="Stapleton M."/>
            <person name="Yamada C."/>
            <person name="Ashburner M."/>
            <person name="Gelbart W.M."/>
            <person name="Rubin G.M."/>
            <person name="Lewis S.E."/>
        </authorList>
    </citation>
    <scope>GENOME REANNOTATION</scope>
    <scope>ALTERNATIVE SPLICING</scope>
    <source>
        <strain>Berkeley</strain>
    </source>
</reference>
<reference key="4">
    <citation type="journal article" date="2002" name="Genome Biol.">
        <title>A Drosophila full-length cDNA resource.</title>
        <authorList>
            <person name="Stapleton M."/>
            <person name="Carlson J.W."/>
            <person name="Brokstein P."/>
            <person name="Yu C."/>
            <person name="Champe M."/>
            <person name="George R.A."/>
            <person name="Guarin H."/>
            <person name="Kronmiller B."/>
            <person name="Pacleb J.M."/>
            <person name="Park S."/>
            <person name="Wan K.H."/>
            <person name="Rubin G.M."/>
            <person name="Celniker S.E."/>
        </authorList>
    </citation>
    <scope>NUCLEOTIDE SEQUENCE [LARGE SCALE MRNA] (ISOFORM A)</scope>
    <source>
        <strain>Berkeley</strain>
        <tissue>Testis</tissue>
    </source>
</reference>
<organism>
    <name type="scientific">Drosophila melanogaster</name>
    <name type="common">Fruit fly</name>
    <dbReference type="NCBI Taxonomy" id="7227"/>
    <lineage>
        <taxon>Eukaryota</taxon>
        <taxon>Metazoa</taxon>
        <taxon>Ecdysozoa</taxon>
        <taxon>Arthropoda</taxon>
        <taxon>Hexapoda</taxon>
        <taxon>Insecta</taxon>
        <taxon>Pterygota</taxon>
        <taxon>Neoptera</taxon>
        <taxon>Endopterygota</taxon>
        <taxon>Diptera</taxon>
        <taxon>Brachycera</taxon>
        <taxon>Muscomorpha</taxon>
        <taxon>Ephydroidea</taxon>
        <taxon>Drosophilidae</taxon>
        <taxon>Drosophila</taxon>
        <taxon>Sophophora</taxon>
    </lineage>
</organism>
<feature type="chain" id="PRO_0000206158" description="Sex-regulated protein janus-A">
    <location>
        <begin position="1"/>
        <end position="135"/>
    </location>
</feature>
<feature type="active site" description="Proton acceptor" evidence="1">
    <location>
        <position position="63"/>
    </location>
</feature>
<feature type="binding site" evidence="1">
    <location>
        <position position="37"/>
    </location>
    <ligand>
        <name>substrate</name>
    </ligand>
</feature>
<feature type="binding site" evidence="1">
    <location>
        <begin position="104"/>
        <end position="106"/>
    </location>
    <ligand>
        <name>substrate</name>
    </ligand>
</feature>
<feature type="splice variant" id="VSP_009384" description="In isoform A." evidence="3">
    <location>
        <begin position="1"/>
        <end position="16"/>
    </location>
</feature>
<feature type="sequence conflict" description="In Ref. 4; AAL90058." evidence="4" ref="4">
    <original>F</original>
    <variation>I</variation>
    <location>
        <position position="44"/>
    </location>
</feature>
<feature type="sequence conflict" description="In Ref. 4; AAL90058." evidence="4" ref="4">
    <original>A</original>
    <variation>T</variation>
    <location>
        <position position="58"/>
    </location>
</feature>
<feature type="sequence conflict" description="In Ref. 4; AAL90058." evidence="4" ref="4">
    <original>E</original>
    <variation>D</variation>
    <location>
        <position position="94"/>
    </location>
</feature>
<proteinExistence type="evidence at transcript level"/>
<protein>
    <recommendedName>
        <fullName>Sex-regulated protein janus-A</fullName>
    </recommendedName>
</protein>
<comment type="function">
    <text evidence="2">JanA and janB regulate somatic sex differentiation.</text>
</comment>
<comment type="alternative products">
    <event type="alternative splicing"/>
    <isoform>
        <id>P20348-1</id>
        <name>B</name>
        <name>jan2</name>
        <sequence type="displayed"/>
    </isoform>
    <isoform>
        <id>P20348-2</id>
        <name>A</name>
        <name>C</name>
        <name>jan1</name>
        <sequence type="described" ref="VSP_009384"/>
    </isoform>
</comment>
<comment type="tissue specificity">
    <text evidence="2">Somatic and germline cells. Isoform B is expressed in both sexes and in somatic and germ line cells. Isoform A is expressed in males and is germ line specific.</text>
</comment>
<comment type="developmental stage">
    <text evidence="2">The non-sex-specific transcript is present at all stages.</text>
</comment>
<comment type="miscellaneous">
    <text>Transcription of janA gives rise to two sex-specific and one non-sex-specific transcripts.</text>
</comment>
<comment type="similarity">
    <text evidence="4">Belongs to the janus family.</text>
</comment>